<organismHost>
    <name type="scientific">Gallus gallus</name>
    <name type="common">Chicken</name>
    <dbReference type="NCBI Taxonomy" id="9031"/>
</organismHost>
<reference key="1">
    <citation type="journal article" date="2000" name="J. Virol.">
        <title>The genome of a very virulent Marek's disease virus.</title>
        <authorList>
            <person name="Tulman E.R."/>
            <person name="Afonso C.L."/>
            <person name="Lu Z."/>
            <person name="Zsak L."/>
            <person name="Rock D.L."/>
            <person name="Kutish G.F."/>
        </authorList>
    </citation>
    <scope>NUCLEOTIDE SEQUENCE [LARGE SCALE GENOMIC DNA]</scope>
</reference>
<feature type="chain" id="PRO_0000406523" description="Tripartite terminase subunit 3">
    <location>
        <begin position="1"/>
        <end position="737"/>
    </location>
</feature>
<feature type="short sequence motif" description="Nuclear localization signal" evidence="1">
    <location>
        <begin position="188"/>
        <end position="194"/>
    </location>
</feature>
<feature type="short sequence motif" description="Walker A motif" evidence="1">
    <location>
        <begin position="263"/>
        <end position="270"/>
    </location>
</feature>
<feature type="short sequence motif" description="Walker B motif" evidence="1">
    <location>
        <begin position="357"/>
        <end position="362"/>
    </location>
</feature>
<feature type="active site" description="For ATPase activity" evidence="1">
    <location>
        <position position="362"/>
    </location>
</feature>
<feature type="active site" description="For nuclease activity" evidence="1">
    <location>
        <position position="517"/>
    </location>
</feature>
<feature type="active site" description="For nuclease activity" evidence="1">
    <location>
        <position position="589"/>
    </location>
</feature>
<feature type="active site" description="For nuclease activity" evidence="1">
    <location>
        <position position="712"/>
    </location>
</feature>
<accession>Q9E6Q2</accession>
<keyword id="KW-0238">DNA-binding</keyword>
<keyword id="KW-1048">Host nucleus</keyword>
<keyword id="KW-0378">Hydrolase</keyword>
<keyword id="KW-1185">Reference proteome</keyword>
<keyword id="KW-0231">Viral genome packaging</keyword>
<keyword id="KW-1188">Viral release from host cell</keyword>
<protein>
    <recommendedName>
        <fullName evidence="1">Tripartite terminase subunit 3</fullName>
        <ecNumber evidence="1">3.1.-.-</ecNumber>
    </recommendedName>
    <alternativeName>
        <fullName evidence="1">Terminase large subunit</fullName>
    </alternativeName>
</protein>
<evidence type="ECO:0000255" key="1">
    <source>
        <dbReference type="HAMAP-Rule" id="MF_04013"/>
    </source>
</evidence>
<dbReference type="EC" id="3.1.-.-" evidence="1"/>
<dbReference type="EMBL" id="AF243438">
    <property type="protein sequence ID" value="AAG14207.1"/>
    <property type="molecule type" value="Genomic_DNA"/>
</dbReference>
<dbReference type="RefSeq" id="YP_001033943.1">
    <property type="nucleotide sequence ID" value="NC_002229.3"/>
</dbReference>
<dbReference type="SMR" id="Q9E6Q2"/>
<dbReference type="GeneID" id="4811488"/>
<dbReference type="KEGG" id="vg:4811488"/>
<dbReference type="Proteomes" id="UP000008072">
    <property type="component" value="Segment"/>
</dbReference>
<dbReference type="GO" id="GO:0042025">
    <property type="term" value="C:host cell nucleus"/>
    <property type="evidence" value="ECO:0007669"/>
    <property type="project" value="UniProtKB-SubCell"/>
</dbReference>
<dbReference type="GO" id="GO:0003677">
    <property type="term" value="F:DNA binding"/>
    <property type="evidence" value="ECO:0007669"/>
    <property type="project" value="UniProtKB-KW"/>
</dbReference>
<dbReference type="GO" id="GO:0016787">
    <property type="term" value="F:hydrolase activity"/>
    <property type="evidence" value="ECO:0007669"/>
    <property type="project" value="UniProtKB-KW"/>
</dbReference>
<dbReference type="GO" id="GO:0051276">
    <property type="term" value="P:chromosome organization"/>
    <property type="evidence" value="ECO:0007669"/>
    <property type="project" value="InterPro"/>
</dbReference>
<dbReference type="Gene3D" id="3.30.420.320">
    <property type="match status" value="1"/>
</dbReference>
<dbReference type="Gene3D" id="3.40.50.300">
    <property type="entry name" value="P-loop containing nucleotide triphosphate hydrolases"/>
    <property type="match status" value="1"/>
</dbReference>
<dbReference type="HAMAP" id="MF_04013">
    <property type="entry name" value="HSV_TRM3"/>
    <property type="match status" value="1"/>
</dbReference>
<dbReference type="InterPro" id="IPR003498">
    <property type="entry name" value="DNA_pack_C"/>
</dbReference>
<dbReference type="InterPro" id="IPR038435">
    <property type="entry name" value="DNA_pack_C_sf"/>
</dbReference>
<dbReference type="InterPro" id="IPR003499">
    <property type="entry name" value="DNA_pack_N"/>
</dbReference>
<dbReference type="InterPro" id="IPR033663">
    <property type="entry name" value="HSV_TRM3"/>
</dbReference>
<dbReference type="InterPro" id="IPR027417">
    <property type="entry name" value="P-loop_NTPase"/>
</dbReference>
<dbReference type="Pfam" id="PF02499">
    <property type="entry name" value="DNA_pack_C"/>
    <property type="match status" value="1"/>
</dbReference>
<dbReference type="Pfam" id="PF02500">
    <property type="entry name" value="DNA_pack_N"/>
    <property type="match status" value="1"/>
</dbReference>
<dbReference type="SUPFAM" id="SSF52540">
    <property type="entry name" value="P-loop containing nucleoside triphosphate hydrolases"/>
    <property type="match status" value="1"/>
</dbReference>
<name>TRM3_GAHVM</name>
<comment type="function">
    <text evidence="1">Component of the molecular motor that translocates viral genomic DNA in empty capsid during DNA packaging. Forms a tripartite terminase complex together with TRM1 and TRM2 in the host cytoplasm. Once the complex reaches the host nucleus, it interacts with the capsid portal vertex. This portal forms a ring in which genomic DNA is translocated into the capsid. TRM3 carries an RNase H-like nuclease activity that plays an important role for the cleavage of concatemeric viral DNA into unit length genomes.</text>
</comment>
<comment type="subunit">
    <text evidence="1">Interacts with the terminase subunits TRM1 and TRM2. Interacts with portal protein.</text>
</comment>
<comment type="subcellular location">
    <subcellularLocation>
        <location evidence="1">Host nucleus</location>
    </subcellularLocation>
    <text evidence="1">Responsible for the nuclear localization of the two others subunits TRM1 and TRM2.</text>
</comment>
<comment type="similarity">
    <text evidence="1">Belongs to the herpesviridae TRM3 protein family.</text>
</comment>
<sequence>MFGGLLGEETKRHFERLMKTKNDRLGASHRNERSIRDGDMVDAPFLNFAIPVPRRHQTVMPAIGILHNCCDSLGIYSAITTRMLYSSIACSEFDELRRDSVPRCYPRITNAQAFLSPMMMRVANSIIFQEYDEMECAAHRNAYYSTMNSFISMRTSDAFKQLTVFISRFSKLLIASFRDVNKLDDHTVKKRARIDAPSYDKLHGTLELFQKMILMHATYFVTSVLLGDHAERAERLLRVAFDTPHFSDIVTRHFRQRATVFLVPRRHGKTWFLVPLIALAMSSFEGIRIGYTSHIRKAIEPVFEDIGDRLRRWFGAHRVDHVKGETITFSFPSGLKSTVTFASSHNTNSIRGQDFNLLFVDEANFIRPDAVQTIIGFLNQATCKIIFVSSTNSGKASTSFLYGLKGSADDLLNVVTYICDEHMKHVTDYTNATSCSCYVLNKPVFITMDGAMRRTAEMFLPDSFMQEIIGGGVVDRTICQGDRSIFTASAIDRFLIYRPSTVNNQDPFSQDLYVYVDPAFTANTKASGTGVAVIGKYGTDYIVFGLEHYFLRALTGESSDSIGYCVAQCLIQICAIHRKRFGVIKIAIEGNSNQDSAVAIATRIAIEMISYMKAAVAPTPHNVSFYHSKSNGTDVEYPYFLLQRQKTTAFDFFIAQFNSGRVLASQDLVSTTVSLTTDPVEYLTKQLTNISEVVTGPTCTRTFSGKKGGNDDTVVALTMAVYISAHIPDMAFAPIRV</sequence>
<gene>
    <name evidence="1" type="primary">TRM3</name>
    <name type="ordered locus">MDV027</name>
</gene>
<organism>
    <name type="scientific">Gallid herpesvirus 2 (strain Chicken/Md5/ATCC VR-987)</name>
    <name type="common">GaHV-2</name>
    <name type="synonym">Marek's disease herpesvirus type 1</name>
    <dbReference type="NCBI Taxonomy" id="10389"/>
    <lineage>
        <taxon>Viruses</taxon>
        <taxon>Duplodnaviria</taxon>
        <taxon>Heunggongvirae</taxon>
        <taxon>Peploviricota</taxon>
        <taxon>Herviviricetes</taxon>
        <taxon>Herpesvirales</taxon>
        <taxon>Orthoherpesviridae</taxon>
        <taxon>Alphaherpesvirinae</taxon>
        <taxon>Mardivirus</taxon>
        <taxon>Mardivirus gallidalpha2</taxon>
        <taxon>Gallid alphaherpesvirus 2</taxon>
    </lineage>
</organism>
<proteinExistence type="inferred from homology"/>